<accession>Q9SVQ0</accession>
<accession>Q6J9Q4</accession>
<feature type="chain" id="PRO_0000290400" description="Ethylene-responsive transcription factor ERF062">
    <location>
        <begin position="1"/>
        <end position="388"/>
    </location>
</feature>
<feature type="DNA-binding region" description="AP2/ERF" evidence="2">
    <location>
        <begin position="231"/>
        <end position="288"/>
    </location>
</feature>
<feature type="region of interest" description="Disordered" evidence="3">
    <location>
        <begin position="314"/>
        <end position="366"/>
    </location>
</feature>
<feature type="compositionally biased region" description="Basic and acidic residues" evidence="3">
    <location>
        <begin position="335"/>
        <end position="360"/>
    </location>
</feature>
<feature type="sequence conflict" description="In Ref. 1; AAT44938." evidence="4" ref="1">
    <original>F</original>
    <variation>S</variation>
    <location>
        <position position="131"/>
    </location>
</feature>
<organism>
    <name type="scientific">Arabidopsis thaliana</name>
    <name type="common">Mouse-ear cress</name>
    <dbReference type="NCBI Taxonomy" id="3702"/>
    <lineage>
        <taxon>Eukaryota</taxon>
        <taxon>Viridiplantae</taxon>
        <taxon>Streptophyta</taxon>
        <taxon>Embryophyta</taxon>
        <taxon>Tracheophyta</taxon>
        <taxon>Spermatophyta</taxon>
        <taxon>Magnoliopsida</taxon>
        <taxon>eudicotyledons</taxon>
        <taxon>Gunneridae</taxon>
        <taxon>Pentapetalae</taxon>
        <taxon>rosids</taxon>
        <taxon>malvids</taxon>
        <taxon>Brassicales</taxon>
        <taxon>Brassicaceae</taxon>
        <taxon>Camelineae</taxon>
        <taxon>Arabidopsis</taxon>
    </lineage>
</organism>
<comment type="function">
    <text evidence="1">Probably acts as a transcriptional activator. Binds to the GCC-box pathogenesis-related promoter element. May be involved in the regulation of gene expression by stress factors and by components of stress signal transduction pathways (By similarity).</text>
</comment>
<comment type="subcellular location">
    <subcellularLocation>
        <location evidence="4">Nucleus</location>
    </subcellularLocation>
</comment>
<comment type="similarity">
    <text evidence="4">Belongs to the AP2/ERF transcription factor family. ERF subfamily.</text>
</comment>
<evidence type="ECO:0000250" key="1"/>
<evidence type="ECO:0000255" key="2">
    <source>
        <dbReference type="PROSITE-ProRule" id="PRU00366"/>
    </source>
</evidence>
<evidence type="ECO:0000256" key="3">
    <source>
        <dbReference type="SAM" id="MobiDB-lite"/>
    </source>
</evidence>
<evidence type="ECO:0000305" key="4"/>
<keyword id="KW-0010">Activator</keyword>
<keyword id="KW-0238">DNA-binding</keyword>
<keyword id="KW-0936">Ethylene signaling pathway</keyword>
<keyword id="KW-0539">Nucleus</keyword>
<keyword id="KW-1185">Reference proteome</keyword>
<keyword id="KW-0804">Transcription</keyword>
<keyword id="KW-0805">Transcription regulation</keyword>
<sequence length="388" mass="44255">MITPIHTQHSLILVYINIYSPPILSKLRTGFILWTNTQKTNKKRNMEDQFPKIETSFMHDKLLSSGIYGFLSSSTPPQLLGVPIFLEGMKSPLLPASSTPSYFVSPHDHELTSSIHPSPVASVPWNFLESFPQSQHPDHHPSKPPNLTLFLKEPKLLELSQSESNMSPYHKYIPNSFYQSDQNRNEWVEINKTLTNYPSKGFGNYWLSTTKTQPMKSKTRKVVQTTTPTKLYRGVRQRHWGKWVAEIRLPRNRTRVWLGTFETAEQAAMAYDTAAYILRGEFAHLNFPDLKHQLKSGSLRCMIASLLESKIQQISSSQVSNSPSPPPPKVGTPEQKNHHMKMESGEDVMMKKQKSHKEVMEGDGVQLSRMPSLDMDLIWDALSFPHSS</sequence>
<reference key="1">
    <citation type="submission" date="2004-02" db="EMBL/GenBank/DDBJ databases">
        <title>Molecular cloning, expression, phylogenetic and functional characterization of the Arabidopsis AP2/EREBP transcription factor family.</title>
        <authorList>
            <person name="Pan Y."/>
            <person name="Gong W."/>
            <person name="Liu D."/>
            <person name="Fu Q."/>
            <person name="Mei W.-Q."/>
            <person name="Song W.-Q."/>
            <person name="Ma L.-G."/>
            <person name="Luo J.-C."/>
            <person name="Deng X.-W."/>
            <person name="Zhu Y.-X."/>
        </authorList>
    </citation>
    <scope>NUCLEOTIDE SEQUENCE [MRNA]</scope>
</reference>
<reference key="2">
    <citation type="journal article" date="1999" name="Nature">
        <title>Sequence and analysis of chromosome 4 of the plant Arabidopsis thaliana.</title>
        <authorList>
            <person name="Mayer K.F.X."/>
            <person name="Schueller C."/>
            <person name="Wambutt R."/>
            <person name="Murphy G."/>
            <person name="Volckaert G."/>
            <person name="Pohl T."/>
            <person name="Duesterhoeft A."/>
            <person name="Stiekema W."/>
            <person name="Entian K.-D."/>
            <person name="Terryn N."/>
            <person name="Harris B."/>
            <person name="Ansorge W."/>
            <person name="Brandt P."/>
            <person name="Grivell L.A."/>
            <person name="Rieger M."/>
            <person name="Weichselgartner M."/>
            <person name="de Simone V."/>
            <person name="Obermaier B."/>
            <person name="Mache R."/>
            <person name="Mueller M."/>
            <person name="Kreis M."/>
            <person name="Delseny M."/>
            <person name="Puigdomenech P."/>
            <person name="Watson M."/>
            <person name="Schmidtheini T."/>
            <person name="Reichert B."/>
            <person name="Portetelle D."/>
            <person name="Perez-Alonso M."/>
            <person name="Boutry M."/>
            <person name="Bancroft I."/>
            <person name="Vos P."/>
            <person name="Hoheisel J."/>
            <person name="Zimmermann W."/>
            <person name="Wedler H."/>
            <person name="Ridley P."/>
            <person name="Langham S.-A."/>
            <person name="McCullagh B."/>
            <person name="Bilham L."/>
            <person name="Robben J."/>
            <person name="van der Schueren J."/>
            <person name="Grymonprez B."/>
            <person name="Chuang Y.-J."/>
            <person name="Vandenbussche F."/>
            <person name="Braeken M."/>
            <person name="Weltjens I."/>
            <person name="Voet M."/>
            <person name="Bastiaens I."/>
            <person name="Aert R."/>
            <person name="Defoor E."/>
            <person name="Weitzenegger T."/>
            <person name="Bothe G."/>
            <person name="Ramsperger U."/>
            <person name="Hilbert H."/>
            <person name="Braun M."/>
            <person name="Holzer E."/>
            <person name="Brandt A."/>
            <person name="Peters S."/>
            <person name="van Staveren M."/>
            <person name="Dirkse W."/>
            <person name="Mooijman P."/>
            <person name="Klein Lankhorst R."/>
            <person name="Rose M."/>
            <person name="Hauf J."/>
            <person name="Koetter P."/>
            <person name="Berneiser S."/>
            <person name="Hempel S."/>
            <person name="Feldpausch M."/>
            <person name="Lamberth S."/>
            <person name="Van den Daele H."/>
            <person name="De Keyser A."/>
            <person name="Buysshaert C."/>
            <person name="Gielen J."/>
            <person name="Villarroel R."/>
            <person name="De Clercq R."/>
            <person name="van Montagu M."/>
            <person name="Rogers J."/>
            <person name="Cronin A."/>
            <person name="Quail M.A."/>
            <person name="Bray-Allen S."/>
            <person name="Clark L."/>
            <person name="Doggett J."/>
            <person name="Hall S."/>
            <person name="Kay M."/>
            <person name="Lennard N."/>
            <person name="McLay K."/>
            <person name="Mayes R."/>
            <person name="Pettett A."/>
            <person name="Rajandream M.A."/>
            <person name="Lyne M."/>
            <person name="Benes V."/>
            <person name="Rechmann S."/>
            <person name="Borkova D."/>
            <person name="Bloecker H."/>
            <person name="Scharfe M."/>
            <person name="Grimm M."/>
            <person name="Loehnert T.-H."/>
            <person name="Dose S."/>
            <person name="de Haan M."/>
            <person name="Maarse A.C."/>
            <person name="Schaefer M."/>
            <person name="Mueller-Auer S."/>
            <person name="Gabel C."/>
            <person name="Fuchs M."/>
            <person name="Fartmann B."/>
            <person name="Granderath K."/>
            <person name="Dauner D."/>
            <person name="Herzl A."/>
            <person name="Neumann S."/>
            <person name="Argiriou A."/>
            <person name="Vitale D."/>
            <person name="Liguori R."/>
            <person name="Piravandi E."/>
            <person name="Massenet O."/>
            <person name="Quigley F."/>
            <person name="Clabauld G."/>
            <person name="Muendlein A."/>
            <person name="Felber R."/>
            <person name="Schnabl S."/>
            <person name="Hiller R."/>
            <person name="Schmidt W."/>
            <person name="Lecharny A."/>
            <person name="Aubourg S."/>
            <person name="Chefdor F."/>
            <person name="Cooke R."/>
            <person name="Berger C."/>
            <person name="Monfort A."/>
            <person name="Casacuberta E."/>
            <person name="Gibbons T."/>
            <person name="Weber N."/>
            <person name="Vandenbol M."/>
            <person name="Bargues M."/>
            <person name="Terol J."/>
            <person name="Torres A."/>
            <person name="Perez-Perez A."/>
            <person name="Purnelle B."/>
            <person name="Bent E."/>
            <person name="Johnson S."/>
            <person name="Tacon D."/>
            <person name="Jesse T."/>
            <person name="Heijnen L."/>
            <person name="Schwarz S."/>
            <person name="Scholler P."/>
            <person name="Heber S."/>
            <person name="Francs P."/>
            <person name="Bielke C."/>
            <person name="Frishman D."/>
            <person name="Haase D."/>
            <person name="Lemcke K."/>
            <person name="Mewes H.-W."/>
            <person name="Stocker S."/>
            <person name="Zaccaria P."/>
            <person name="Bevan M."/>
            <person name="Wilson R.K."/>
            <person name="de la Bastide M."/>
            <person name="Habermann K."/>
            <person name="Parnell L."/>
            <person name="Dedhia N."/>
            <person name="Gnoj L."/>
            <person name="Schutz K."/>
            <person name="Huang E."/>
            <person name="Spiegel L."/>
            <person name="Sekhon M."/>
            <person name="Murray J."/>
            <person name="Sheet P."/>
            <person name="Cordes M."/>
            <person name="Abu-Threideh J."/>
            <person name="Stoneking T."/>
            <person name="Kalicki J."/>
            <person name="Graves T."/>
            <person name="Harmon G."/>
            <person name="Edwards J."/>
            <person name="Latreille P."/>
            <person name="Courtney L."/>
            <person name="Cloud J."/>
            <person name="Abbott A."/>
            <person name="Scott K."/>
            <person name="Johnson D."/>
            <person name="Minx P."/>
            <person name="Bentley D."/>
            <person name="Fulton B."/>
            <person name="Miller N."/>
            <person name="Greco T."/>
            <person name="Kemp K."/>
            <person name="Kramer J."/>
            <person name="Fulton L."/>
            <person name="Mardis E."/>
            <person name="Dante M."/>
            <person name="Pepin K."/>
            <person name="Hillier L.W."/>
            <person name="Nelson J."/>
            <person name="Spieth J."/>
            <person name="Ryan E."/>
            <person name="Andrews S."/>
            <person name="Geisel C."/>
            <person name="Layman D."/>
            <person name="Du H."/>
            <person name="Ali J."/>
            <person name="Berghoff A."/>
            <person name="Jones K."/>
            <person name="Drone K."/>
            <person name="Cotton M."/>
            <person name="Joshu C."/>
            <person name="Antonoiu B."/>
            <person name="Zidanic M."/>
            <person name="Strong C."/>
            <person name="Sun H."/>
            <person name="Lamar B."/>
            <person name="Yordan C."/>
            <person name="Ma P."/>
            <person name="Zhong J."/>
            <person name="Preston R."/>
            <person name="Vil D."/>
            <person name="Shekher M."/>
            <person name="Matero A."/>
            <person name="Shah R."/>
            <person name="Swaby I.K."/>
            <person name="O'Shaughnessy A."/>
            <person name="Rodriguez M."/>
            <person name="Hoffman J."/>
            <person name="Till S."/>
            <person name="Granat S."/>
            <person name="Shohdy N."/>
            <person name="Hasegawa A."/>
            <person name="Hameed A."/>
            <person name="Lodhi M."/>
            <person name="Johnson A."/>
            <person name="Chen E."/>
            <person name="Marra M.A."/>
            <person name="Martienssen R."/>
            <person name="McCombie W.R."/>
        </authorList>
    </citation>
    <scope>NUCLEOTIDE SEQUENCE [LARGE SCALE GENOMIC DNA]</scope>
    <source>
        <strain>cv. Columbia</strain>
    </source>
</reference>
<reference key="3">
    <citation type="journal article" date="2017" name="Plant J.">
        <title>Araport11: a complete reannotation of the Arabidopsis thaliana reference genome.</title>
        <authorList>
            <person name="Cheng C.Y."/>
            <person name="Krishnakumar V."/>
            <person name="Chan A.P."/>
            <person name="Thibaud-Nissen F."/>
            <person name="Schobel S."/>
            <person name="Town C.D."/>
        </authorList>
    </citation>
    <scope>GENOME REANNOTATION</scope>
    <source>
        <strain>cv. Columbia</strain>
    </source>
</reference>
<reference key="4">
    <citation type="submission" date="2006-12" db="EMBL/GenBank/DDBJ databases">
        <title>Arabidopsis ORF clones.</title>
        <authorList>
            <person name="Bautista V.R."/>
            <person name="Kim C.J."/>
            <person name="Chen H."/>
            <person name="Wu S.Y."/>
            <person name="De Los Reyes C."/>
            <person name="Ecker J.R."/>
        </authorList>
    </citation>
    <scope>NUCLEOTIDE SEQUENCE [LARGE SCALE MRNA]</scope>
    <source>
        <strain>cv. Columbia</strain>
    </source>
</reference>
<reference key="5">
    <citation type="journal article" date="2006" name="Plant Physiol.">
        <title>Genome-wide analysis of the ERF gene family in Arabidopsis and rice.</title>
        <authorList>
            <person name="Nakano T."/>
            <person name="Suzuki K."/>
            <person name="Fujimura T."/>
            <person name="Shinshi H."/>
        </authorList>
    </citation>
    <scope>GENE FAMILY</scope>
    <scope>NOMENCLATURE</scope>
</reference>
<dbReference type="EMBL" id="AY560871">
    <property type="protein sequence ID" value="AAT44938.1"/>
    <property type="molecule type" value="mRNA"/>
</dbReference>
<dbReference type="EMBL" id="AL035528">
    <property type="protein sequence ID" value="CAB36826.2"/>
    <property type="molecule type" value="Genomic_DNA"/>
</dbReference>
<dbReference type="EMBL" id="AL161537">
    <property type="protein sequence ID" value="CAB78404.1"/>
    <property type="molecule type" value="Genomic_DNA"/>
</dbReference>
<dbReference type="EMBL" id="CP002687">
    <property type="protein sequence ID" value="AEE83304.1"/>
    <property type="molecule type" value="Genomic_DNA"/>
</dbReference>
<dbReference type="EMBL" id="BT029729">
    <property type="protein sequence ID" value="ABM05999.1"/>
    <property type="molecule type" value="mRNA"/>
</dbReference>
<dbReference type="PIR" id="G85147">
    <property type="entry name" value="G85147"/>
</dbReference>
<dbReference type="PIR" id="T05231">
    <property type="entry name" value="T05231"/>
</dbReference>
<dbReference type="RefSeq" id="NP_193098.1">
    <property type="nucleotide sequence ID" value="NM_117436.3"/>
</dbReference>
<dbReference type="SMR" id="Q9SVQ0"/>
<dbReference type="BioGRID" id="12293">
    <property type="interactions" value="5"/>
</dbReference>
<dbReference type="FunCoup" id="Q9SVQ0">
    <property type="interactions" value="24"/>
</dbReference>
<dbReference type="IntAct" id="Q9SVQ0">
    <property type="interactions" value="6"/>
</dbReference>
<dbReference type="MINT" id="Q9SVQ0"/>
<dbReference type="STRING" id="3702.Q9SVQ0"/>
<dbReference type="GlyGen" id="Q9SVQ0">
    <property type="glycosylation" value="1 site"/>
</dbReference>
<dbReference type="iPTMnet" id="Q9SVQ0"/>
<dbReference type="PaxDb" id="3702-AT4G13620.1"/>
<dbReference type="EnsemblPlants" id="AT4G13620.1">
    <property type="protein sequence ID" value="AT4G13620.1"/>
    <property type="gene ID" value="AT4G13620"/>
</dbReference>
<dbReference type="GeneID" id="826996"/>
<dbReference type="Gramene" id="AT4G13620.1">
    <property type="protein sequence ID" value="AT4G13620.1"/>
    <property type="gene ID" value="AT4G13620"/>
</dbReference>
<dbReference type="KEGG" id="ath:AT4G13620"/>
<dbReference type="Araport" id="AT4G13620"/>
<dbReference type="TAIR" id="AT4G13620"/>
<dbReference type="eggNOG" id="ENOG502QRCV">
    <property type="taxonomic scope" value="Eukaryota"/>
</dbReference>
<dbReference type="HOGENOM" id="CLU_057028_0_0_1"/>
<dbReference type="InParanoid" id="Q9SVQ0"/>
<dbReference type="OMA" id="MDLIWDA"/>
<dbReference type="PhylomeDB" id="Q9SVQ0"/>
<dbReference type="PRO" id="PR:Q9SVQ0"/>
<dbReference type="Proteomes" id="UP000006548">
    <property type="component" value="Chromosome 4"/>
</dbReference>
<dbReference type="ExpressionAtlas" id="Q9SVQ0">
    <property type="expression patterns" value="baseline and differential"/>
</dbReference>
<dbReference type="GO" id="GO:0005634">
    <property type="term" value="C:nucleus"/>
    <property type="evidence" value="ECO:0007669"/>
    <property type="project" value="UniProtKB-SubCell"/>
</dbReference>
<dbReference type="GO" id="GO:0003700">
    <property type="term" value="F:DNA-binding transcription factor activity"/>
    <property type="evidence" value="ECO:0000250"/>
    <property type="project" value="TAIR"/>
</dbReference>
<dbReference type="GO" id="GO:0000976">
    <property type="term" value="F:transcription cis-regulatory region binding"/>
    <property type="evidence" value="ECO:0007669"/>
    <property type="project" value="UniProtKB-ARBA"/>
</dbReference>
<dbReference type="GO" id="GO:0009873">
    <property type="term" value="P:ethylene-activated signaling pathway"/>
    <property type="evidence" value="ECO:0007669"/>
    <property type="project" value="UniProtKB-KW"/>
</dbReference>
<dbReference type="CDD" id="cd00018">
    <property type="entry name" value="AP2"/>
    <property type="match status" value="1"/>
</dbReference>
<dbReference type="FunFam" id="3.30.730.10:FF:000001">
    <property type="entry name" value="Ethylene-responsive transcription factor 2"/>
    <property type="match status" value="1"/>
</dbReference>
<dbReference type="Gene3D" id="3.30.730.10">
    <property type="entry name" value="AP2/ERF domain"/>
    <property type="match status" value="1"/>
</dbReference>
<dbReference type="InterPro" id="IPR001471">
    <property type="entry name" value="AP2/ERF_dom"/>
</dbReference>
<dbReference type="InterPro" id="IPR036955">
    <property type="entry name" value="AP2/ERF_dom_sf"/>
</dbReference>
<dbReference type="InterPro" id="IPR016177">
    <property type="entry name" value="DNA-bd_dom_sf"/>
</dbReference>
<dbReference type="InterPro" id="IPR051758">
    <property type="entry name" value="ERF/AP2-like"/>
</dbReference>
<dbReference type="PANTHER" id="PTHR31657">
    <property type="entry name" value="ETHYLENE-RESPONSIVE TRANSCRIPTION FACTOR ERF061"/>
    <property type="match status" value="1"/>
</dbReference>
<dbReference type="PANTHER" id="PTHR31657:SF40">
    <property type="entry name" value="ETHYLENE-RESPONSIVE TRANSCRIPTION FACTOR ERF062"/>
    <property type="match status" value="1"/>
</dbReference>
<dbReference type="Pfam" id="PF00847">
    <property type="entry name" value="AP2"/>
    <property type="match status" value="1"/>
</dbReference>
<dbReference type="PRINTS" id="PR00367">
    <property type="entry name" value="ETHRSPELEMNT"/>
</dbReference>
<dbReference type="SMART" id="SM00380">
    <property type="entry name" value="AP2"/>
    <property type="match status" value="1"/>
</dbReference>
<dbReference type="SUPFAM" id="SSF54171">
    <property type="entry name" value="DNA-binding domain"/>
    <property type="match status" value="1"/>
</dbReference>
<dbReference type="PROSITE" id="PS51032">
    <property type="entry name" value="AP2_ERF"/>
    <property type="match status" value="1"/>
</dbReference>
<gene>
    <name type="primary">ERF062</name>
    <name type="ordered locus">At4g13620</name>
    <name type="ORF">F18A5.10</name>
</gene>
<name>ERF62_ARATH</name>
<proteinExistence type="evidence at transcript level"/>
<protein>
    <recommendedName>
        <fullName>Ethylene-responsive transcription factor ERF062</fullName>
    </recommendedName>
</protein>